<feature type="chain" id="PRO_0000089094" description="Actin-related protein 4">
    <location>
        <begin position="1"/>
        <end position="493"/>
    </location>
</feature>
<feature type="region of interest" description="Disordered" evidence="2">
    <location>
        <begin position="333"/>
        <end position="381"/>
    </location>
</feature>
<feature type="compositionally biased region" description="Polar residues" evidence="2">
    <location>
        <begin position="351"/>
        <end position="372"/>
    </location>
</feature>
<protein>
    <recommendedName>
        <fullName>Actin-related protein 4</fullName>
    </recommendedName>
    <alternativeName>
        <fullName>Actin-like protein ARP4</fullName>
        <shortName>Actin-like protein 4</shortName>
    </alternativeName>
</protein>
<organism>
    <name type="scientific">Candida glabrata (strain ATCC 2001 / BCRC 20586 / JCM 3761 / NBRC 0622 / NRRL Y-65 / CBS 138)</name>
    <name type="common">Yeast</name>
    <name type="synonym">Nakaseomyces glabratus</name>
    <dbReference type="NCBI Taxonomy" id="284593"/>
    <lineage>
        <taxon>Eukaryota</taxon>
        <taxon>Fungi</taxon>
        <taxon>Dikarya</taxon>
        <taxon>Ascomycota</taxon>
        <taxon>Saccharomycotina</taxon>
        <taxon>Saccharomycetes</taxon>
        <taxon>Saccharomycetales</taxon>
        <taxon>Saccharomycetaceae</taxon>
        <taxon>Nakaseomyces</taxon>
    </lineage>
</organism>
<sequence length="493" mass="55187">MSNSALQVYGGDEITAVIIDPGSYTTNIGYAGTDCPQSILPSSFGEIHEAEESTSEDNTEKTRKTRKVFSEQSIPIPRPDYEVKRVVENGQVCDWDSAVEQWSWALRNELHIESNRGIPAMLTEPLWNSKENRSKSLEILLEGMEFEACYLTATSTAVSFATGRPNSLIVDIGHDIASVTPVIDGMSLSKSTRCNHFAGRFLNKLLTDYLKPREIIPLFEVEQRKPEFKRRSFSYSVADSLYDYANSRGFFQECKETIFQVATTPIAQEKNNQATSTGRTIESPWNEVIEFESNDRYQFAEQLINPLKESVPDDWPVNVAGVVETWRNDYVPMKRNKVGSGNNKEKEGTKESTPLDSNTATPLPESSSTTNENGKRTAEDIKREELPGIVDLISSSISSCDVDIRASLAHNLVITGGSSTIPGLSDRILNELNMKFPALKFRVLATGQSIERQYQSWLGGSILSSLGTFHQLWIGKKEYEEVGSERLLHDRLR</sequence>
<evidence type="ECO:0000250" key="1"/>
<evidence type="ECO:0000256" key="2">
    <source>
        <dbReference type="SAM" id="MobiDB-lite"/>
    </source>
</evidence>
<evidence type="ECO:0000305" key="3"/>
<reference key="1">
    <citation type="journal article" date="2004" name="Nature">
        <title>Genome evolution in yeasts.</title>
        <authorList>
            <person name="Dujon B."/>
            <person name="Sherman D."/>
            <person name="Fischer G."/>
            <person name="Durrens P."/>
            <person name="Casaregola S."/>
            <person name="Lafontaine I."/>
            <person name="de Montigny J."/>
            <person name="Marck C."/>
            <person name="Neuveglise C."/>
            <person name="Talla E."/>
            <person name="Goffard N."/>
            <person name="Frangeul L."/>
            <person name="Aigle M."/>
            <person name="Anthouard V."/>
            <person name="Babour A."/>
            <person name="Barbe V."/>
            <person name="Barnay S."/>
            <person name="Blanchin S."/>
            <person name="Beckerich J.-M."/>
            <person name="Beyne E."/>
            <person name="Bleykasten C."/>
            <person name="Boisrame A."/>
            <person name="Boyer J."/>
            <person name="Cattolico L."/>
            <person name="Confanioleri F."/>
            <person name="de Daruvar A."/>
            <person name="Despons L."/>
            <person name="Fabre E."/>
            <person name="Fairhead C."/>
            <person name="Ferry-Dumazet H."/>
            <person name="Groppi A."/>
            <person name="Hantraye F."/>
            <person name="Hennequin C."/>
            <person name="Jauniaux N."/>
            <person name="Joyet P."/>
            <person name="Kachouri R."/>
            <person name="Kerrest A."/>
            <person name="Koszul R."/>
            <person name="Lemaire M."/>
            <person name="Lesur I."/>
            <person name="Ma L."/>
            <person name="Muller H."/>
            <person name="Nicaud J.-M."/>
            <person name="Nikolski M."/>
            <person name="Oztas S."/>
            <person name="Ozier-Kalogeropoulos O."/>
            <person name="Pellenz S."/>
            <person name="Potier S."/>
            <person name="Richard G.-F."/>
            <person name="Straub M.-L."/>
            <person name="Suleau A."/>
            <person name="Swennen D."/>
            <person name="Tekaia F."/>
            <person name="Wesolowski-Louvel M."/>
            <person name="Westhof E."/>
            <person name="Wirth B."/>
            <person name="Zeniou-Meyer M."/>
            <person name="Zivanovic Y."/>
            <person name="Bolotin-Fukuhara M."/>
            <person name="Thierry A."/>
            <person name="Bouchier C."/>
            <person name="Caudron B."/>
            <person name="Scarpelli C."/>
            <person name="Gaillardin C."/>
            <person name="Weissenbach J."/>
            <person name="Wincker P."/>
            <person name="Souciet J.-L."/>
        </authorList>
    </citation>
    <scope>NUCLEOTIDE SEQUENCE [LARGE SCALE GENOMIC DNA]</scope>
    <source>
        <strain>ATCC 2001 / BCRC 20586 / JCM 3761 / NBRC 0622 / NRRL Y-65 / CBS 138</strain>
    </source>
</reference>
<keyword id="KW-0010">Activator</keyword>
<keyword id="KW-0156">Chromatin regulator</keyword>
<keyword id="KW-0227">DNA damage</keyword>
<keyword id="KW-0234">DNA repair</keyword>
<keyword id="KW-0539">Nucleus</keyword>
<keyword id="KW-1185">Reference proteome</keyword>
<keyword id="KW-0804">Transcription</keyword>
<keyword id="KW-0805">Transcription regulation</keyword>
<name>ARP4_CANGA</name>
<dbReference type="EMBL" id="CR380959">
    <property type="protein sequence ID" value="CAG62462.1"/>
    <property type="molecule type" value="Genomic_DNA"/>
</dbReference>
<dbReference type="RefSeq" id="XP_449486.1">
    <property type="nucleotide sequence ID" value="XM_449486.1"/>
</dbReference>
<dbReference type="SMR" id="Q6FJV8"/>
<dbReference type="FunCoup" id="Q6FJV8">
    <property type="interactions" value="416"/>
</dbReference>
<dbReference type="STRING" id="284593.Q6FJV8"/>
<dbReference type="EnsemblFungi" id="CAGL0M03201g-T">
    <property type="protein sequence ID" value="CAGL0M03201g-T-p1"/>
    <property type="gene ID" value="CAGL0M03201g"/>
</dbReference>
<dbReference type="KEGG" id="cgr:2891494"/>
<dbReference type="CGD" id="CAL0137375">
    <property type="gene designation" value="CAGL0M03201g"/>
</dbReference>
<dbReference type="VEuPathDB" id="FungiDB:CAGL0M03201g"/>
<dbReference type="eggNOG" id="KOG0679">
    <property type="taxonomic scope" value="Eukaryota"/>
</dbReference>
<dbReference type="HOGENOM" id="CLU_027965_6_2_1"/>
<dbReference type="InParanoid" id="Q6FJV8"/>
<dbReference type="OMA" id="MWLSRQE"/>
<dbReference type="Proteomes" id="UP000002428">
    <property type="component" value="Chromosome M"/>
</dbReference>
<dbReference type="GO" id="GO:0031011">
    <property type="term" value="C:Ino80 complex"/>
    <property type="evidence" value="ECO:0007669"/>
    <property type="project" value="EnsemblFungi"/>
</dbReference>
<dbReference type="GO" id="GO:0035267">
    <property type="term" value="C:NuA4 histone acetyltransferase complex"/>
    <property type="evidence" value="ECO:0007669"/>
    <property type="project" value="EnsemblFungi"/>
</dbReference>
<dbReference type="GO" id="GO:0000812">
    <property type="term" value="C:Swr1 complex"/>
    <property type="evidence" value="ECO:0007669"/>
    <property type="project" value="EnsemblFungi"/>
</dbReference>
<dbReference type="GO" id="GO:0005524">
    <property type="term" value="F:ATP binding"/>
    <property type="evidence" value="ECO:0007669"/>
    <property type="project" value="EnsemblFungi"/>
</dbReference>
<dbReference type="GO" id="GO:0003682">
    <property type="term" value="F:chromatin binding"/>
    <property type="evidence" value="ECO:0007669"/>
    <property type="project" value="EnsemblFungi"/>
</dbReference>
<dbReference type="GO" id="GO:0042393">
    <property type="term" value="F:histone binding"/>
    <property type="evidence" value="ECO:0007669"/>
    <property type="project" value="EnsemblFungi"/>
</dbReference>
<dbReference type="GO" id="GO:0006338">
    <property type="term" value="P:chromatin remodeling"/>
    <property type="evidence" value="ECO:0007669"/>
    <property type="project" value="EnsemblFungi"/>
</dbReference>
<dbReference type="GO" id="GO:0006281">
    <property type="term" value="P:DNA repair"/>
    <property type="evidence" value="ECO:0007669"/>
    <property type="project" value="UniProtKB-KW"/>
</dbReference>
<dbReference type="GO" id="GO:0051382">
    <property type="term" value="P:kinetochore assembly"/>
    <property type="evidence" value="ECO:0007669"/>
    <property type="project" value="EnsemblFungi"/>
</dbReference>
<dbReference type="GO" id="GO:0006357">
    <property type="term" value="P:regulation of transcription by RNA polymerase II"/>
    <property type="evidence" value="ECO:0007669"/>
    <property type="project" value="EnsemblFungi"/>
</dbReference>
<dbReference type="FunFam" id="3.30.420.40:FF:000203">
    <property type="entry name" value="Actin-related protein 4"/>
    <property type="match status" value="1"/>
</dbReference>
<dbReference type="FunFam" id="3.30.420.40:FF:000058">
    <property type="entry name" value="Putative actin-related protein 5"/>
    <property type="match status" value="1"/>
</dbReference>
<dbReference type="Gene3D" id="3.30.420.40">
    <property type="match status" value="3"/>
</dbReference>
<dbReference type="Gene3D" id="3.90.640.10">
    <property type="entry name" value="Actin, Chain A, domain 4"/>
    <property type="match status" value="1"/>
</dbReference>
<dbReference type="InterPro" id="IPR004000">
    <property type="entry name" value="Actin"/>
</dbReference>
<dbReference type="InterPro" id="IPR020902">
    <property type="entry name" value="Actin/actin-like_CS"/>
</dbReference>
<dbReference type="InterPro" id="IPR043129">
    <property type="entry name" value="ATPase_NBD"/>
</dbReference>
<dbReference type="PANTHER" id="PTHR11937">
    <property type="entry name" value="ACTIN"/>
    <property type="match status" value="1"/>
</dbReference>
<dbReference type="Pfam" id="PF00022">
    <property type="entry name" value="Actin"/>
    <property type="match status" value="1"/>
</dbReference>
<dbReference type="SMART" id="SM00268">
    <property type="entry name" value="ACTIN"/>
    <property type="match status" value="1"/>
</dbReference>
<dbReference type="SUPFAM" id="SSF53067">
    <property type="entry name" value="Actin-like ATPase domain"/>
    <property type="match status" value="2"/>
</dbReference>
<dbReference type="PROSITE" id="PS01132">
    <property type="entry name" value="ACTINS_ACT_LIKE"/>
    <property type="match status" value="1"/>
</dbReference>
<comment type="function">
    <text evidence="1">Chromatin interaction component of the NuA4 histone acetyltransferase complex which is involved in transcriptional activation of selected genes principally by acetylation of nucleosomal histone H4 and H2A. The NuA4 complex is also involved in DNA repair. Is required for NuA4 complex integrity. Component of the SWR1 complex which mediates the ATP-dependent exchange of histone H2A for the H2A variant HZT1 leading to transcriptional regulation of selected genes by chromatin remodeling. Component of the INO80 complex which remodels chromatin by shifting nucleosomes and is involved in DNA repair (By similarity).</text>
</comment>
<comment type="subunit">
    <text evidence="1">Component of the NuA4 histone acetyltransferase complex, of the INO80 chromatin remodeling complex, and of the SWR1 chromatin remodeling complex.</text>
</comment>
<comment type="subcellular location">
    <subcellularLocation>
        <location evidence="1">Nucleus</location>
    </subcellularLocation>
</comment>
<comment type="similarity">
    <text evidence="3">Belongs to the actin family. ARP4 subfamily.</text>
</comment>
<accession>Q6FJV8</accession>
<gene>
    <name type="primary">ARP4</name>
    <name type="ordered locus">CAGL0M03201g</name>
</gene>
<proteinExistence type="inferred from homology"/>